<name>SLO1_SCHPO</name>
<dbReference type="EMBL" id="CU329672">
    <property type="protein sequence ID" value="CCD31397.1"/>
    <property type="molecule type" value="Genomic_DNA"/>
</dbReference>
<dbReference type="RefSeq" id="XP_004001751.1">
    <property type="nucleotide sequence ID" value="XM_004001702.1"/>
</dbReference>
<dbReference type="SMR" id="G2TRT5"/>
<dbReference type="iPTMnet" id="G2TRT5"/>
<dbReference type="PaxDb" id="4896-SPCC663.18.1"/>
<dbReference type="EnsemblFungi" id="SPCC663.18.1">
    <property type="protein sequence ID" value="SPCC663.18.1:pep"/>
    <property type="gene ID" value="SPCC663.18"/>
</dbReference>
<dbReference type="PomBase" id="SPCC663.18"/>
<dbReference type="VEuPathDB" id="FungiDB:SPCC663.18"/>
<dbReference type="HOGENOM" id="CLU_2850993_0_0_1"/>
<dbReference type="InParanoid" id="G2TRT5"/>
<dbReference type="OMA" id="EYLCQYI"/>
<dbReference type="PRO" id="PR:G2TRT5"/>
<dbReference type="Proteomes" id="UP000002485">
    <property type="component" value="Chromosome III"/>
</dbReference>
<dbReference type="GO" id="GO:0005737">
    <property type="term" value="C:cytoplasm"/>
    <property type="evidence" value="ECO:0000303"/>
    <property type="project" value="PomBase"/>
</dbReference>
<dbReference type="GO" id="GO:0016192">
    <property type="term" value="P:vesicle-mediated transport"/>
    <property type="evidence" value="ECO:0000303"/>
    <property type="project" value="PomBase"/>
</dbReference>
<dbReference type="Gene3D" id="1.20.5.170">
    <property type="match status" value="1"/>
</dbReference>
<dbReference type="InterPro" id="IPR019357">
    <property type="entry name" value="SCOC"/>
</dbReference>
<dbReference type="Pfam" id="PF10224">
    <property type="entry name" value="DUF2205"/>
    <property type="match status" value="1"/>
</dbReference>
<evidence type="ECO:0000255" key="1"/>
<evidence type="ECO:0000305" key="2"/>
<protein>
    <recommendedName>
        <fullName>SCOCO-like protein 1</fullName>
    </recommendedName>
</protein>
<gene>
    <name type="ORF">SPCC663.18</name>
</gene>
<proteinExistence type="inferred from homology"/>
<reference key="1">
    <citation type="journal article" date="2002" name="Nature">
        <title>The genome sequence of Schizosaccharomyces pombe.</title>
        <authorList>
            <person name="Wood V."/>
            <person name="Gwilliam R."/>
            <person name="Rajandream M.A."/>
            <person name="Lyne M.H."/>
            <person name="Lyne R."/>
            <person name="Stewart A."/>
            <person name="Sgouros J.G."/>
            <person name="Peat N."/>
            <person name="Hayles J."/>
            <person name="Baker S.G."/>
            <person name="Basham D."/>
            <person name="Bowman S."/>
            <person name="Brooks K."/>
            <person name="Brown D."/>
            <person name="Brown S."/>
            <person name="Chillingworth T."/>
            <person name="Churcher C.M."/>
            <person name="Collins M."/>
            <person name="Connor R."/>
            <person name="Cronin A."/>
            <person name="Davis P."/>
            <person name="Feltwell T."/>
            <person name="Fraser A."/>
            <person name="Gentles S."/>
            <person name="Goble A."/>
            <person name="Hamlin N."/>
            <person name="Harris D.E."/>
            <person name="Hidalgo J."/>
            <person name="Hodgson G."/>
            <person name="Holroyd S."/>
            <person name="Hornsby T."/>
            <person name="Howarth S."/>
            <person name="Huckle E.J."/>
            <person name="Hunt S."/>
            <person name="Jagels K."/>
            <person name="James K.D."/>
            <person name="Jones L."/>
            <person name="Jones M."/>
            <person name="Leather S."/>
            <person name="McDonald S."/>
            <person name="McLean J."/>
            <person name="Mooney P."/>
            <person name="Moule S."/>
            <person name="Mungall K.L."/>
            <person name="Murphy L.D."/>
            <person name="Niblett D."/>
            <person name="Odell C."/>
            <person name="Oliver K."/>
            <person name="O'Neil S."/>
            <person name="Pearson D."/>
            <person name="Quail M.A."/>
            <person name="Rabbinowitsch E."/>
            <person name="Rutherford K.M."/>
            <person name="Rutter S."/>
            <person name="Saunders D."/>
            <person name="Seeger K."/>
            <person name="Sharp S."/>
            <person name="Skelton J."/>
            <person name="Simmonds M.N."/>
            <person name="Squares R."/>
            <person name="Squares S."/>
            <person name="Stevens K."/>
            <person name="Taylor K."/>
            <person name="Taylor R.G."/>
            <person name="Tivey A."/>
            <person name="Walsh S.V."/>
            <person name="Warren T."/>
            <person name="Whitehead S."/>
            <person name="Woodward J.R."/>
            <person name="Volckaert G."/>
            <person name="Aert R."/>
            <person name="Robben J."/>
            <person name="Grymonprez B."/>
            <person name="Weltjens I."/>
            <person name="Vanstreels E."/>
            <person name="Rieger M."/>
            <person name="Schaefer M."/>
            <person name="Mueller-Auer S."/>
            <person name="Gabel C."/>
            <person name="Fuchs M."/>
            <person name="Duesterhoeft A."/>
            <person name="Fritzc C."/>
            <person name="Holzer E."/>
            <person name="Moestl D."/>
            <person name="Hilbert H."/>
            <person name="Borzym K."/>
            <person name="Langer I."/>
            <person name="Beck A."/>
            <person name="Lehrach H."/>
            <person name="Reinhardt R."/>
            <person name="Pohl T.M."/>
            <person name="Eger P."/>
            <person name="Zimmermann W."/>
            <person name="Wedler H."/>
            <person name="Wambutt R."/>
            <person name="Purnelle B."/>
            <person name="Goffeau A."/>
            <person name="Cadieu E."/>
            <person name="Dreano S."/>
            <person name="Gloux S."/>
            <person name="Lelaure V."/>
            <person name="Mottier S."/>
            <person name="Galibert F."/>
            <person name="Aves S.J."/>
            <person name="Xiang Z."/>
            <person name="Hunt C."/>
            <person name="Moore K."/>
            <person name="Hurst S.M."/>
            <person name="Lucas M."/>
            <person name="Rochet M."/>
            <person name="Gaillardin C."/>
            <person name="Tallada V.A."/>
            <person name="Garzon A."/>
            <person name="Thode G."/>
            <person name="Daga R.R."/>
            <person name="Cruzado L."/>
            <person name="Jimenez J."/>
            <person name="Sanchez M."/>
            <person name="del Rey F."/>
            <person name="Benito J."/>
            <person name="Dominguez A."/>
            <person name="Revuelta J.L."/>
            <person name="Moreno S."/>
            <person name="Armstrong J."/>
            <person name="Forsburg S.L."/>
            <person name="Cerutti L."/>
            <person name="Lowe T."/>
            <person name="McCombie W.R."/>
            <person name="Paulsen I."/>
            <person name="Potashkin J."/>
            <person name="Shpakovski G.V."/>
            <person name="Ussery D."/>
            <person name="Barrell B.G."/>
            <person name="Nurse P."/>
        </authorList>
    </citation>
    <scope>NUCLEOTIDE SEQUENCE [LARGE SCALE GENOMIC DNA]</scope>
    <source>
        <strain>972 / ATCC 24843</strain>
    </source>
</reference>
<reference key="2">
    <citation type="journal article" date="2011" name="Science">
        <title>Comparative functional genomics of the fission yeasts.</title>
        <authorList>
            <person name="Rhind N."/>
            <person name="Chen Z."/>
            <person name="Yassour M."/>
            <person name="Thompson D.A."/>
            <person name="Haas B.J."/>
            <person name="Habib N."/>
            <person name="Wapinski I."/>
            <person name="Roy S."/>
            <person name="Lin M.F."/>
            <person name="Heiman D.I."/>
            <person name="Young S.K."/>
            <person name="Furuya K."/>
            <person name="Guo Y."/>
            <person name="Pidoux A."/>
            <person name="Chen H.M."/>
            <person name="Robbertse B."/>
            <person name="Goldberg J.M."/>
            <person name="Aoki K."/>
            <person name="Bayne E.H."/>
            <person name="Berlin A.M."/>
            <person name="Desjardins C.A."/>
            <person name="Dobbs E."/>
            <person name="Dukaj L."/>
            <person name="Fan L."/>
            <person name="FitzGerald M.G."/>
            <person name="French C."/>
            <person name="Gujja S."/>
            <person name="Hansen K."/>
            <person name="Keifenheim D."/>
            <person name="Levin J.Z."/>
            <person name="Mosher R.A."/>
            <person name="Mueller C.A."/>
            <person name="Pfiffner J."/>
            <person name="Priest M."/>
            <person name="Russ C."/>
            <person name="Smialowska A."/>
            <person name="Swoboda P."/>
            <person name="Sykes S.M."/>
            <person name="Vaughn M."/>
            <person name="Vengrova S."/>
            <person name="Yoder R."/>
            <person name="Zeng Q."/>
            <person name="Allshire R."/>
            <person name="Baulcombe D."/>
            <person name="Birren B.W."/>
            <person name="Brown W."/>
            <person name="Ekwall K."/>
            <person name="Kellis M."/>
            <person name="Leatherwood J."/>
            <person name="Levin H."/>
            <person name="Margalit H."/>
            <person name="Martienssen R."/>
            <person name="Nieduszynski C.A."/>
            <person name="Spatafora J.W."/>
            <person name="Friedman N."/>
            <person name="Dalgaard J.Z."/>
            <person name="Baumann P."/>
            <person name="Niki H."/>
            <person name="Regev A."/>
            <person name="Nusbaum C."/>
        </authorList>
    </citation>
    <scope>IDENTIFICATION</scope>
</reference>
<sequence length="65" mass="7612">MSTDSLPRSLMEQKAMELQQQLQALLDEIDQNKQESENISRESEYLCQYIGSMMAFQNRQTVPKK</sequence>
<organism>
    <name type="scientific">Schizosaccharomyces pombe (strain 972 / ATCC 24843)</name>
    <name type="common">Fission yeast</name>
    <dbReference type="NCBI Taxonomy" id="284812"/>
    <lineage>
        <taxon>Eukaryota</taxon>
        <taxon>Fungi</taxon>
        <taxon>Dikarya</taxon>
        <taxon>Ascomycota</taxon>
        <taxon>Taphrinomycotina</taxon>
        <taxon>Schizosaccharomycetes</taxon>
        <taxon>Schizosaccharomycetales</taxon>
        <taxon>Schizosaccharomycetaceae</taxon>
        <taxon>Schizosaccharomyces</taxon>
    </lineage>
</organism>
<keyword id="KW-0175">Coiled coil</keyword>
<keyword id="KW-1185">Reference proteome</keyword>
<comment type="similarity">
    <text evidence="2">Belongs to the SLO1 family.</text>
</comment>
<accession>G2TRT5</accession>
<feature type="chain" id="PRO_0000416671" description="SCOCO-like protein 1">
    <location>
        <begin position="1"/>
        <end position="65"/>
    </location>
</feature>
<feature type="coiled-coil region" evidence="1">
    <location>
        <begin position="8"/>
        <end position="44"/>
    </location>
</feature>